<gene>
    <name type="primary">ybiS</name>
    <name type="ordered locus">c0905</name>
</gene>
<protein>
    <recommendedName>
        <fullName>Probable L,D-transpeptidase YbiS</fullName>
        <ecNumber>2.-.-.-</ecNumber>
    </recommendedName>
</protein>
<feature type="signal peptide">
    <location>
        <begin position="1"/>
        <end position="24"/>
    </location>
</feature>
<feature type="chain" id="PRO_0000042567" description="Probable L,D-transpeptidase YbiS">
    <location>
        <begin position="25"/>
        <end position="306"/>
    </location>
</feature>
<feature type="domain" description="L,D-TPase catalytic" evidence="2">
    <location>
        <begin position="99"/>
        <end position="234"/>
    </location>
</feature>
<feature type="active site" description="Proton donor/acceptor" evidence="2">
    <location>
        <position position="194"/>
    </location>
</feature>
<feature type="active site" description="Nucleophile" evidence="2">
    <location>
        <position position="210"/>
    </location>
</feature>
<evidence type="ECO:0000250" key="1"/>
<evidence type="ECO:0000255" key="2">
    <source>
        <dbReference type="PROSITE-ProRule" id="PRU01373"/>
    </source>
</evidence>
<evidence type="ECO:0000305" key="3"/>
<accession>P0AAX9</accession>
<accession>P75789</accession>
<sequence>MNMKLKTLFAAAFAVVGFCSTASAVTYPLPTDGSRLVGQNQVITIPEGNTQPLEYFAAEYQMGLSNMMEANPGVDTFLPKGGTVLNIPQQLILPDTVHEGIVINSAEMRLYYYPKGTNTVIVLPIGIGQLGKDTPINWTTKVERKKAGPTWTPTAKMHAEYRAAGEPLPAVVPAGPDNPMGLYALYIGRLYAIHGTNANFGIGLRVSHGCVRLRNEDIKFLFEKVPVGTRVQFIDEPVKATTEPDGSRYIEVHNPLSTTEAQFEGQEIVPITLTKSVQTVTGQPDVDQVVLDEAIKNRSGMPVRLN</sequence>
<organism>
    <name type="scientific">Escherichia coli O6:H1 (strain CFT073 / ATCC 700928 / UPEC)</name>
    <dbReference type="NCBI Taxonomy" id="199310"/>
    <lineage>
        <taxon>Bacteria</taxon>
        <taxon>Pseudomonadati</taxon>
        <taxon>Pseudomonadota</taxon>
        <taxon>Gammaproteobacteria</taxon>
        <taxon>Enterobacterales</taxon>
        <taxon>Enterobacteriaceae</taxon>
        <taxon>Escherichia</taxon>
    </lineage>
</organism>
<name>YBIS_ECOL6</name>
<comment type="function">
    <text evidence="1">Responsible, at least in part, for anchoring of the major outer membrane lipoprotein (Lpp) to the peptidoglycan via a meso-diaminopimelyl-L-Lys- bond on the terminal residue of Lpp.</text>
</comment>
<comment type="pathway">
    <text>Cell wall biogenesis; peptidoglycan biosynthesis.</text>
</comment>
<comment type="subcellular location">
    <subcellularLocation>
        <location evidence="3">Periplasm</location>
    </subcellularLocation>
</comment>
<comment type="similarity">
    <text evidence="3">Belongs to the YkuD family.</text>
</comment>
<keyword id="KW-0133">Cell shape</keyword>
<keyword id="KW-0961">Cell wall biogenesis/degradation</keyword>
<keyword id="KW-0328">Glycosyltransferase</keyword>
<keyword id="KW-0378">Hydrolase</keyword>
<keyword id="KW-0573">Peptidoglycan synthesis</keyword>
<keyword id="KW-0574">Periplasm</keyword>
<keyword id="KW-1185">Reference proteome</keyword>
<keyword id="KW-0732">Signal</keyword>
<keyword id="KW-0808">Transferase</keyword>
<reference key="1">
    <citation type="journal article" date="2002" name="Proc. Natl. Acad. Sci. U.S.A.">
        <title>Extensive mosaic structure revealed by the complete genome sequence of uropathogenic Escherichia coli.</title>
        <authorList>
            <person name="Welch R.A."/>
            <person name="Burland V."/>
            <person name="Plunkett G. III"/>
            <person name="Redford P."/>
            <person name="Roesch P."/>
            <person name="Rasko D."/>
            <person name="Buckles E.L."/>
            <person name="Liou S.-R."/>
            <person name="Boutin A."/>
            <person name="Hackett J."/>
            <person name="Stroud D."/>
            <person name="Mayhew G.F."/>
            <person name="Rose D.J."/>
            <person name="Zhou S."/>
            <person name="Schwartz D.C."/>
            <person name="Perna N.T."/>
            <person name="Mobley H.L.T."/>
            <person name="Donnenberg M.S."/>
            <person name="Blattner F.R."/>
        </authorList>
    </citation>
    <scope>NUCLEOTIDE SEQUENCE [LARGE SCALE GENOMIC DNA]</scope>
    <source>
        <strain>CFT073 / ATCC 700928 / UPEC</strain>
    </source>
</reference>
<dbReference type="EC" id="2.-.-.-"/>
<dbReference type="EMBL" id="AE014075">
    <property type="protein sequence ID" value="AAN79378.1"/>
    <property type="molecule type" value="Genomic_DNA"/>
</dbReference>
<dbReference type="SMR" id="P0AAX9"/>
<dbReference type="STRING" id="199310.c0905"/>
<dbReference type="KEGG" id="ecc:c0905"/>
<dbReference type="eggNOG" id="COG1376">
    <property type="taxonomic scope" value="Bacteria"/>
</dbReference>
<dbReference type="HOGENOM" id="CLU_046834_0_1_6"/>
<dbReference type="BioCyc" id="ECOL199310:C0905-MONOMER"/>
<dbReference type="UniPathway" id="UPA00219"/>
<dbReference type="Proteomes" id="UP000001410">
    <property type="component" value="Chromosome"/>
</dbReference>
<dbReference type="GO" id="GO:0005576">
    <property type="term" value="C:extracellular region"/>
    <property type="evidence" value="ECO:0007669"/>
    <property type="project" value="TreeGrafter"/>
</dbReference>
<dbReference type="GO" id="GO:0042597">
    <property type="term" value="C:periplasmic space"/>
    <property type="evidence" value="ECO:0007669"/>
    <property type="project" value="UniProtKB-SubCell"/>
</dbReference>
<dbReference type="GO" id="GO:0016757">
    <property type="term" value="F:glycosyltransferase activity"/>
    <property type="evidence" value="ECO:0007669"/>
    <property type="project" value="UniProtKB-KW"/>
</dbReference>
<dbReference type="GO" id="GO:0071972">
    <property type="term" value="F:peptidoglycan L,D-transpeptidase activity"/>
    <property type="evidence" value="ECO:0007669"/>
    <property type="project" value="TreeGrafter"/>
</dbReference>
<dbReference type="GO" id="GO:0071555">
    <property type="term" value="P:cell wall organization"/>
    <property type="evidence" value="ECO:0007669"/>
    <property type="project" value="UniProtKB-KW"/>
</dbReference>
<dbReference type="GO" id="GO:0018104">
    <property type="term" value="P:peptidoglycan-protein cross-linking"/>
    <property type="evidence" value="ECO:0007669"/>
    <property type="project" value="TreeGrafter"/>
</dbReference>
<dbReference type="GO" id="GO:0008360">
    <property type="term" value="P:regulation of cell shape"/>
    <property type="evidence" value="ECO:0007669"/>
    <property type="project" value="UniProtKB-KW"/>
</dbReference>
<dbReference type="CDD" id="cd16913">
    <property type="entry name" value="YkuD_like"/>
    <property type="match status" value="1"/>
</dbReference>
<dbReference type="FunFam" id="2.40.440.10:FF:000001">
    <property type="entry name" value="L,D-transpeptidase YbiS"/>
    <property type="match status" value="1"/>
</dbReference>
<dbReference type="Gene3D" id="2.40.440.10">
    <property type="entry name" value="L,D-transpeptidase catalytic domain-like"/>
    <property type="match status" value="1"/>
</dbReference>
<dbReference type="InterPro" id="IPR050979">
    <property type="entry name" value="LD-transpeptidase"/>
</dbReference>
<dbReference type="InterPro" id="IPR005490">
    <property type="entry name" value="LD_TPept_cat_dom"/>
</dbReference>
<dbReference type="InterPro" id="IPR041597">
    <property type="entry name" value="Ldt_C"/>
</dbReference>
<dbReference type="InterPro" id="IPR038063">
    <property type="entry name" value="Transpep_catalytic_dom"/>
</dbReference>
<dbReference type="NCBIfam" id="NF007612">
    <property type="entry name" value="PRK10260.1"/>
    <property type="match status" value="1"/>
</dbReference>
<dbReference type="PANTHER" id="PTHR30582">
    <property type="entry name" value="L,D-TRANSPEPTIDASE"/>
    <property type="match status" value="1"/>
</dbReference>
<dbReference type="PANTHER" id="PTHR30582:SF31">
    <property type="entry name" value="L,D-TRANSPEPTIDASE YBIS-RELATED"/>
    <property type="match status" value="1"/>
</dbReference>
<dbReference type="Pfam" id="PF17969">
    <property type="entry name" value="Ldt_C"/>
    <property type="match status" value="1"/>
</dbReference>
<dbReference type="Pfam" id="PF03734">
    <property type="entry name" value="YkuD"/>
    <property type="match status" value="1"/>
</dbReference>
<dbReference type="SUPFAM" id="SSF141523">
    <property type="entry name" value="L,D-transpeptidase catalytic domain-like"/>
    <property type="match status" value="1"/>
</dbReference>
<dbReference type="PROSITE" id="PS52029">
    <property type="entry name" value="LD_TPASE"/>
    <property type="match status" value="1"/>
</dbReference>
<proteinExistence type="inferred from homology"/>